<reference key="1">
    <citation type="submission" date="2006-03" db="EMBL/GenBank/DDBJ databases">
        <title>Complete sequence of Shewanella denitrificans OS217.</title>
        <authorList>
            <consortium name="US DOE Joint Genome Institute"/>
            <person name="Copeland A."/>
            <person name="Lucas S."/>
            <person name="Lapidus A."/>
            <person name="Barry K."/>
            <person name="Detter J.C."/>
            <person name="Glavina del Rio T."/>
            <person name="Hammon N."/>
            <person name="Israni S."/>
            <person name="Dalin E."/>
            <person name="Tice H."/>
            <person name="Pitluck S."/>
            <person name="Brettin T."/>
            <person name="Bruce D."/>
            <person name="Han C."/>
            <person name="Tapia R."/>
            <person name="Gilna P."/>
            <person name="Kiss H."/>
            <person name="Schmutz J."/>
            <person name="Larimer F."/>
            <person name="Land M."/>
            <person name="Hauser L."/>
            <person name="Kyrpides N."/>
            <person name="Lykidis A."/>
            <person name="Richardson P."/>
        </authorList>
    </citation>
    <scope>NUCLEOTIDE SEQUENCE [LARGE SCALE GENOMIC DNA]</scope>
    <source>
        <strain>OS217 / ATCC BAA-1090 / DSM 15013</strain>
    </source>
</reference>
<feature type="signal peptide" evidence="1">
    <location>
        <begin position="1"/>
        <end position="21"/>
    </location>
</feature>
<feature type="chain" id="PRO_0000354917" description="Catalase-peroxidase">
    <location>
        <begin position="22"/>
        <end position="720"/>
    </location>
</feature>
<feature type="active site" description="Proton acceptor" evidence="1">
    <location>
        <position position="95"/>
    </location>
</feature>
<feature type="binding site" description="axial binding residue" evidence="1">
    <location>
        <position position="263"/>
    </location>
    <ligand>
        <name>heme b</name>
        <dbReference type="ChEBI" id="CHEBI:60344"/>
    </ligand>
    <ligandPart>
        <name>Fe</name>
        <dbReference type="ChEBI" id="CHEBI:18248"/>
    </ligandPart>
</feature>
<feature type="site" description="Transition state stabilizer" evidence="1">
    <location>
        <position position="91"/>
    </location>
</feature>
<feature type="cross-link" description="Tryptophyl-tyrosyl-methioninium (Trp-Tyr) (with M-248)" evidence="1">
    <location>
        <begin position="94"/>
        <end position="222"/>
    </location>
</feature>
<feature type="cross-link" description="Tryptophyl-tyrosyl-methioninium (Tyr-Met) (with W-94)" evidence="1">
    <location>
        <begin position="222"/>
        <end position="248"/>
    </location>
</feature>
<protein>
    <recommendedName>
        <fullName evidence="1">Catalase-peroxidase</fullName>
        <shortName evidence="1">CP</shortName>
        <ecNumber evidence="1">1.11.1.21</ecNumber>
    </recommendedName>
    <alternativeName>
        <fullName evidence="1">Peroxidase/catalase</fullName>
    </alternativeName>
</protein>
<keyword id="KW-0349">Heme</keyword>
<keyword id="KW-0376">Hydrogen peroxide</keyword>
<keyword id="KW-0408">Iron</keyword>
<keyword id="KW-0479">Metal-binding</keyword>
<keyword id="KW-0560">Oxidoreductase</keyword>
<keyword id="KW-0575">Peroxidase</keyword>
<keyword id="KW-1185">Reference proteome</keyword>
<keyword id="KW-0732">Signal</keyword>
<name>KATG_SHEDO</name>
<comment type="function">
    <text evidence="1">Bifunctional enzyme with both catalase and broad-spectrum peroxidase activity.</text>
</comment>
<comment type="catalytic activity">
    <reaction evidence="1">
        <text>H2O2 + AH2 = A + 2 H2O</text>
        <dbReference type="Rhea" id="RHEA:30275"/>
        <dbReference type="ChEBI" id="CHEBI:13193"/>
        <dbReference type="ChEBI" id="CHEBI:15377"/>
        <dbReference type="ChEBI" id="CHEBI:16240"/>
        <dbReference type="ChEBI" id="CHEBI:17499"/>
        <dbReference type="EC" id="1.11.1.21"/>
    </reaction>
</comment>
<comment type="catalytic activity">
    <reaction evidence="1">
        <text>2 H2O2 = O2 + 2 H2O</text>
        <dbReference type="Rhea" id="RHEA:20309"/>
        <dbReference type="ChEBI" id="CHEBI:15377"/>
        <dbReference type="ChEBI" id="CHEBI:15379"/>
        <dbReference type="ChEBI" id="CHEBI:16240"/>
        <dbReference type="EC" id="1.11.1.21"/>
    </reaction>
</comment>
<comment type="cofactor">
    <cofactor evidence="1">
        <name>heme b</name>
        <dbReference type="ChEBI" id="CHEBI:60344"/>
    </cofactor>
    <text evidence="1">Binds 1 heme b (iron(II)-protoporphyrin IX) group per dimer.</text>
</comment>
<comment type="subunit">
    <text evidence="1">Homodimer or homotetramer.</text>
</comment>
<comment type="PTM">
    <text evidence="1">Formation of the three residue Trp-Tyr-Met cross-link is important for the catalase, but not the peroxidase activity of the enzyme.</text>
</comment>
<comment type="similarity">
    <text evidence="1">Belongs to the peroxidase family. Peroxidase/catalase subfamily.</text>
</comment>
<organism>
    <name type="scientific">Shewanella denitrificans (strain OS217 / ATCC BAA-1090 / DSM 15013)</name>
    <dbReference type="NCBI Taxonomy" id="318161"/>
    <lineage>
        <taxon>Bacteria</taxon>
        <taxon>Pseudomonadati</taxon>
        <taxon>Pseudomonadota</taxon>
        <taxon>Gammaproteobacteria</taxon>
        <taxon>Alteromonadales</taxon>
        <taxon>Shewanellaceae</taxon>
        <taxon>Shewanella</taxon>
    </lineage>
</organism>
<dbReference type="EC" id="1.11.1.21" evidence="1"/>
<dbReference type="EMBL" id="CP000302">
    <property type="protein sequence ID" value="ABE54670.1"/>
    <property type="molecule type" value="Genomic_DNA"/>
</dbReference>
<dbReference type="RefSeq" id="WP_011495828.1">
    <property type="nucleotide sequence ID" value="NC_007954.1"/>
</dbReference>
<dbReference type="SMR" id="Q12PF6"/>
<dbReference type="STRING" id="318161.Sden_1384"/>
<dbReference type="PeroxiBase" id="2713">
    <property type="entry name" value="SdeCP01"/>
</dbReference>
<dbReference type="KEGG" id="sdn:Sden_1384"/>
<dbReference type="eggNOG" id="COG0376">
    <property type="taxonomic scope" value="Bacteria"/>
</dbReference>
<dbReference type="HOGENOM" id="CLU_025424_2_0_6"/>
<dbReference type="OrthoDB" id="9759743at2"/>
<dbReference type="Proteomes" id="UP000001982">
    <property type="component" value="Chromosome"/>
</dbReference>
<dbReference type="GO" id="GO:0005829">
    <property type="term" value="C:cytosol"/>
    <property type="evidence" value="ECO:0007669"/>
    <property type="project" value="TreeGrafter"/>
</dbReference>
<dbReference type="GO" id="GO:0004096">
    <property type="term" value="F:catalase activity"/>
    <property type="evidence" value="ECO:0007669"/>
    <property type="project" value="UniProtKB-UniRule"/>
</dbReference>
<dbReference type="GO" id="GO:0020037">
    <property type="term" value="F:heme binding"/>
    <property type="evidence" value="ECO:0007669"/>
    <property type="project" value="InterPro"/>
</dbReference>
<dbReference type="GO" id="GO:0046872">
    <property type="term" value="F:metal ion binding"/>
    <property type="evidence" value="ECO:0007669"/>
    <property type="project" value="UniProtKB-KW"/>
</dbReference>
<dbReference type="GO" id="GO:0070301">
    <property type="term" value="P:cellular response to hydrogen peroxide"/>
    <property type="evidence" value="ECO:0007669"/>
    <property type="project" value="TreeGrafter"/>
</dbReference>
<dbReference type="GO" id="GO:0042744">
    <property type="term" value="P:hydrogen peroxide catabolic process"/>
    <property type="evidence" value="ECO:0007669"/>
    <property type="project" value="UniProtKB-KW"/>
</dbReference>
<dbReference type="CDD" id="cd00649">
    <property type="entry name" value="catalase_peroxidase_1"/>
    <property type="match status" value="1"/>
</dbReference>
<dbReference type="FunFam" id="1.10.420.10:FF:000004">
    <property type="entry name" value="Catalase-peroxidase"/>
    <property type="match status" value="1"/>
</dbReference>
<dbReference type="FunFam" id="1.10.520.10:FF:000002">
    <property type="entry name" value="Catalase-peroxidase"/>
    <property type="match status" value="1"/>
</dbReference>
<dbReference type="Gene3D" id="1.10.520.10">
    <property type="match status" value="2"/>
</dbReference>
<dbReference type="Gene3D" id="1.10.420.10">
    <property type="entry name" value="Peroxidase, domain 2"/>
    <property type="match status" value="2"/>
</dbReference>
<dbReference type="HAMAP" id="MF_01961">
    <property type="entry name" value="Catal_peroxid"/>
    <property type="match status" value="1"/>
</dbReference>
<dbReference type="InterPro" id="IPR000763">
    <property type="entry name" value="Catalase_peroxidase"/>
</dbReference>
<dbReference type="InterPro" id="IPR002016">
    <property type="entry name" value="Haem_peroxidase"/>
</dbReference>
<dbReference type="InterPro" id="IPR010255">
    <property type="entry name" value="Haem_peroxidase_sf"/>
</dbReference>
<dbReference type="InterPro" id="IPR019794">
    <property type="entry name" value="Peroxidases_AS"/>
</dbReference>
<dbReference type="NCBIfam" id="TIGR00198">
    <property type="entry name" value="cat_per_HPI"/>
    <property type="match status" value="1"/>
</dbReference>
<dbReference type="NCBIfam" id="NF011635">
    <property type="entry name" value="PRK15061.1"/>
    <property type="match status" value="1"/>
</dbReference>
<dbReference type="PANTHER" id="PTHR30555:SF6">
    <property type="entry name" value="CATALASE-PEROXIDASE"/>
    <property type="match status" value="1"/>
</dbReference>
<dbReference type="PANTHER" id="PTHR30555">
    <property type="entry name" value="HYDROPEROXIDASE I, BIFUNCTIONAL CATALASE-PEROXIDASE"/>
    <property type="match status" value="1"/>
</dbReference>
<dbReference type="Pfam" id="PF00141">
    <property type="entry name" value="peroxidase"/>
    <property type="match status" value="2"/>
</dbReference>
<dbReference type="PRINTS" id="PR00460">
    <property type="entry name" value="BPEROXIDASE"/>
</dbReference>
<dbReference type="PRINTS" id="PR00458">
    <property type="entry name" value="PEROXIDASE"/>
</dbReference>
<dbReference type="SUPFAM" id="SSF48113">
    <property type="entry name" value="Heme-dependent peroxidases"/>
    <property type="match status" value="2"/>
</dbReference>
<dbReference type="PROSITE" id="PS00436">
    <property type="entry name" value="PEROXIDASE_2"/>
    <property type="match status" value="1"/>
</dbReference>
<dbReference type="PROSITE" id="PS50873">
    <property type="entry name" value="PEROXIDASE_4"/>
    <property type="match status" value="2"/>
</dbReference>
<gene>
    <name evidence="1" type="primary">katG</name>
    <name type="ordered locus">Sden_1384</name>
</gene>
<evidence type="ECO:0000255" key="1">
    <source>
        <dbReference type="HAMAP-Rule" id="MF_01961"/>
    </source>
</evidence>
<accession>Q12PF6</accession>
<proteinExistence type="inferred from homology"/>
<sequence>MSENKCPVMHGSATTTENSMANMNWWPKSLSLDILHQHDHKTNPMAADFNYQDEVKKLDFVALKNDLHALMTDSQAWWPADWGHYGGLMIRLTWHAAGTYRIADGRGGAGHGSQRFAPLNSWPDNGNLDKARRLLWPIKKKYGNKLSWADLIAYAGTIAYESMGLKTFGFAFGREDIWHPEKDIYWGAEKDWLLPTDNDNSRYSGERNLENPLAAVMMGLIYVNPEGVDGKPDPLKTAQDIRETFARMAMNDEETVALTAGGHTVGKAHGNGNADLLGPEPEDADIHDQGFGWLNKAKRGIGRDTVTSGIEGAWTTHPTQWDNGYFTMLLNHEWELCKSPAGAWQWQPINIKEEDKPRDVEDPSISTMPMMTDADMAMKMDPEYRKISEHFHRDPEYFSKVFSRAWFKLTHRDMGPKVRYLGPDVPVEDLLWQDPVPTGPKDFNVAVVKKAIKETGLSISDMVTTAWDSARTFRGSDKRGGANGARIRLALQKQWAGNEPKRLASVLSVLEPIAASHGVSVADVIVLAGNLGIELAAKKAGFDVTVPFISGRGDATDEMTDNESFAVLEPLHDGYRNWLKQDFAVSAEELMLDRTQLMGLTAHEMTVLVGGMRVIGTNYAETGHGVFTERKGALTNDFFVNLTDMNYIWKPIGQNEYEICERETGKRKWTASRVDLIFGSNSVLRSYAEVYAQDDNKQKFVNDFISAWTKMMNADRFDVS</sequence>